<protein>
    <recommendedName>
        <fullName>Uncharacterized protein ZC412.3</fullName>
    </recommendedName>
</protein>
<reference key="1">
    <citation type="journal article" date="1998" name="Science">
        <title>Genome sequence of the nematode C. elegans: a platform for investigating biology.</title>
        <authorList>
            <consortium name="The C. elegans sequencing consortium"/>
        </authorList>
    </citation>
    <scope>NUCLEOTIDE SEQUENCE [LARGE SCALE GENOMIC DNA]</scope>
    <source>
        <strain>Bristol N2</strain>
    </source>
</reference>
<reference key="2">
    <citation type="journal article" date="2003" name="Nat. Biotechnol.">
        <title>Lectin affinity capture, isotope-coded tagging and mass spectrometry to identify N-linked glycoproteins.</title>
        <authorList>
            <person name="Kaji H."/>
            <person name="Saito H."/>
            <person name="Yamauchi Y."/>
            <person name="Shinkawa T."/>
            <person name="Taoka M."/>
            <person name="Hirabayashi J."/>
            <person name="Kasai K."/>
            <person name="Takahashi N."/>
            <person name="Isobe T."/>
        </authorList>
    </citation>
    <scope>GLYCOSYLATION [LARGE SCALE ANALYSIS] AT ASN-159</scope>
    <scope>IDENTIFICATION BY MASS SPECTROMETRY</scope>
    <source>
        <strain>Bristol N2</strain>
    </source>
</reference>
<reference key="3">
    <citation type="journal article" date="2007" name="Mol. Cell. Proteomics">
        <title>Proteomics reveals N-linked glycoprotein diversity in Caenorhabditis elegans and suggests an atypical translocation mechanism for integral membrane proteins.</title>
        <authorList>
            <person name="Kaji H."/>
            <person name="Kamiie J."/>
            <person name="Kawakami H."/>
            <person name="Kido K."/>
            <person name="Yamauchi Y."/>
            <person name="Shinkawa T."/>
            <person name="Taoka M."/>
            <person name="Takahashi N."/>
            <person name="Isobe T."/>
        </authorList>
    </citation>
    <scope>GLYCOSYLATION [LARGE SCALE ANALYSIS] AT ASN-159 AND ASN-223</scope>
    <scope>IDENTIFICATION BY MASS SPECTROMETRY</scope>
    <source>
        <strain>Bristol N2</strain>
    </source>
</reference>
<name>YHB8_CAEEL</name>
<organism>
    <name type="scientific">Caenorhabditis elegans</name>
    <dbReference type="NCBI Taxonomy" id="6239"/>
    <lineage>
        <taxon>Eukaryota</taxon>
        <taxon>Metazoa</taxon>
        <taxon>Ecdysozoa</taxon>
        <taxon>Nematoda</taxon>
        <taxon>Chromadorea</taxon>
        <taxon>Rhabditida</taxon>
        <taxon>Rhabditina</taxon>
        <taxon>Rhabditomorpha</taxon>
        <taxon>Rhabditoidea</taxon>
        <taxon>Rhabditidae</taxon>
        <taxon>Peloderinae</taxon>
        <taxon>Caenorhabditis</taxon>
    </lineage>
</organism>
<proteinExistence type="evidence at protein level"/>
<comment type="subcellular location">
    <subcellularLocation>
        <location evidence="4">Secreted</location>
    </subcellularLocation>
</comment>
<gene>
    <name type="ORF">ZC412.3</name>
</gene>
<accession>Q23307</accession>
<dbReference type="EMBL" id="Z78067">
    <property type="protein sequence ID" value="CAB01530.1"/>
    <property type="molecule type" value="Genomic_DNA"/>
</dbReference>
<dbReference type="PIR" id="T27561">
    <property type="entry name" value="T27561"/>
</dbReference>
<dbReference type="RefSeq" id="NP_506662.1">
    <property type="nucleotide sequence ID" value="NM_074261.7"/>
</dbReference>
<dbReference type="BioGRID" id="533009">
    <property type="interactions" value="3"/>
</dbReference>
<dbReference type="FunCoup" id="Q23307">
    <property type="interactions" value="246"/>
</dbReference>
<dbReference type="iPTMnet" id="Q23307"/>
<dbReference type="PaxDb" id="6239-ZC412.3.1"/>
<dbReference type="PeptideAtlas" id="Q23307"/>
<dbReference type="EnsemblMetazoa" id="ZC412.3a.1">
    <property type="protein sequence ID" value="ZC412.3a.1"/>
    <property type="gene ID" value="WBGene00013884"/>
</dbReference>
<dbReference type="EnsemblMetazoa" id="ZC412.3a.2">
    <property type="protein sequence ID" value="ZC412.3a.2"/>
    <property type="gene ID" value="WBGene00013884"/>
</dbReference>
<dbReference type="GeneID" id="3565691"/>
<dbReference type="KEGG" id="cel:CELE_ZC412.3"/>
<dbReference type="UCSC" id="ZC412.3.1">
    <property type="organism name" value="c. elegans"/>
</dbReference>
<dbReference type="AGR" id="WB:WBGene00013884"/>
<dbReference type="CTD" id="3565691"/>
<dbReference type="WormBase" id="ZC412.3a">
    <property type="protein sequence ID" value="CE15215"/>
    <property type="gene ID" value="WBGene00013884"/>
</dbReference>
<dbReference type="eggNOG" id="ENOG502TH8V">
    <property type="taxonomic scope" value="Eukaryota"/>
</dbReference>
<dbReference type="GeneTree" id="ENSGT01060000253267"/>
<dbReference type="HOGENOM" id="CLU_097291_0_0_1"/>
<dbReference type="InParanoid" id="Q23307"/>
<dbReference type="OMA" id="NGSWKTE"/>
<dbReference type="OrthoDB" id="5785512at2759"/>
<dbReference type="PhylomeDB" id="Q23307"/>
<dbReference type="PRO" id="PR:Q23307"/>
<dbReference type="Proteomes" id="UP000001940">
    <property type="component" value="Chromosome V"/>
</dbReference>
<dbReference type="Bgee" id="WBGene00013884">
    <property type="expression patterns" value="Expressed in larva and 2 other cell types or tissues"/>
</dbReference>
<dbReference type="ExpressionAtlas" id="Q23307">
    <property type="expression patterns" value="baseline and differential"/>
</dbReference>
<dbReference type="GO" id="GO:0005576">
    <property type="term" value="C:extracellular region"/>
    <property type="evidence" value="ECO:0007669"/>
    <property type="project" value="UniProtKB-SubCell"/>
</dbReference>
<dbReference type="InterPro" id="IPR040282">
    <property type="entry name" value="Mig-18-like"/>
</dbReference>
<dbReference type="InterPro" id="IPR055119">
    <property type="entry name" value="Mig18_Fn1"/>
</dbReference>
<dbReference type="PANTHER" id="PTHR35572">
    <property type="entry name" value="PROTEIN CBG04538-RELATED"/>
    <property type="match status" value="1"/>
</dbReference>
<dbReference type="Pfam" id="PF23003">
    <property type="entry name" value="Fn1_2"/>
    <property type="match status" value="3"/>
</dbReference>
<keyword id="KW-0325">Glycoprotein</keyword>
<keyword id="KW-1185">Reference proteome</keyword>
<keyword id="KW-0964">Secreted</keyword>
<keyword id="KW-0732">Signal</keyword>
<sequence>MRTLVLLSSVAILSTLAVKCKYDGKDLENNEVITVQNAFRIKCLTEDNGSWKTEIIGCVTPDGTEINAGEKKEVGDKVHECVKSESGQVSLKESKGRTAACPGGQKHGEQWQEKSFKFRCGDGGVVKFEACVGQDGSVIPAGETGKIGGFDVKCEQHANGTITMQAANDPKSYDCTAKDGSSKKNGEEYVEGNFVRKCGDYGQGKIIGCHAENVGNTIGINQNVTSGDIVYSCTKDGSNYSFKTYSLKAN</sequence>
<feature type="signal peptide" evidence="1">
    <location>
        <begin position="1"/>
        <end position="17"/>
    </location>
</feature>
<feature type="chain" id="PRO_0000248543" description="Uncharacterized protein ZC412.3">
    <location>
        <begin position="18"/>
        <end position="250"/>
    </location>
</feature>
<feature type="glycosylation site" description="N-linked (GlcNAc...) asparagine" evidence="1">
    <location>
        <position position="48"/>
    </location>
</feature>
<feature type="glycosylation site" description="N-linked (GlcNAc...) asparagine" evidence="2 3">
    <location>
        <position position="159"/>
    </location>
</feature>
<feature type="glycosylation site" description="N-linked (GlcNAc...) asparagine" evidence="3">
    <location>
        <position position="223"/>
    </location>
</feature>
<feature type="glycosylation site" description="N-linked (GlcNAc...) asparagine" evidence="1">
    <location>
        <position position="239"/>
    </location>
</feature>
<evidence type="ECO:0000255" key="1"/>
<evidence type="ECO:0000269" key="2">
    <source>
    </source>
</evidence>
<evidence type="ECO:0000269" key="3">
    <source>
    </source>
</evidence>
<evidence type="ECO:0000305" key="4"/>